<proteinExistence type="evidence at protein level"/>
<name>PG073_VACCW</name>
<keyword id="KW-0002">3D-structure</keyword>
<keyword id="KW-1185">Reference proteome</keyword>
<keyword id="KW-0946">Virion</keyword>
<sequence length="129" mass="14899">MELVNIFLETDAGRVKFAIKNTDDVCASELINKFVELLSEYIHIDQSEFYLVVKDKDIFYFKCDRGSISIVNNEFYVFDEPLLFVKDFTNVTGVEFIVTETMPCRIIPKNNHAVISVVTNHKFYNGLSL</sequence>
<organismHost>
    <name type="scientific">Bos taurus</name>
    <name type="common">Bovine</name>
    <dbReference type="NCBI Taxonomy" id="9913"/>
</organismHost>
<evidence type="ECO:0000269" key="1">
    <source>
    </source>
</evidence>
<evidence type="ECO:0000269" key="2">
    <source>
    </source>
</evidence>
<evidence type="ECO:0000305" key="3"/>
<accession>P68448</accession>
<accession>P21051</accession>
<accession>Q76ZV4</accession>
<comment type="subcellular location">
    <subcellularLocation>
        <location evidence="2">Virion</location>
    </subcellularLocation>
    <text>Found in the core of mature virions.</text>
</comment>
<comment type="induction">
    <text evidence="1 2">Expressed in the intermediate phase of the viral replicative cycle.</text>
</comment>
<comment type="similarity">
    <text evidence="3">Belongs to the orthopoxvirus OPG073 family.</text>
</comment>
<organism>
    <name type="scientific">Vaccinia virus (strain Western Reserve)</name>
    <name type="common">VACV</name>
    <name type="synonym">Vaccinia virus (strain WR)</name>
    <dbReference type="NCBI Taxonomy" id="10254"/>
    <lineage>
        <taxon>Viruses</taxon>
        <taxon>Varidnaviria</taxon>
        <taxon>Bamfordvirae</taxon>
        <taxon>Nucleocytoviricota</taxon>
        <taxon>Pokkesviricetes</taxon>
        <taxon>Chitovirales</taxon>
        <taxon>Poxviridae</taxon>
        <taxon>Chordopoxvirinae</taxon>
        <taxon>Orthopoxvirus</taxon>
        <taxon>Vaccinia virus</taxon>
    </lineage>
</organism>
<gene>
    <name type="primary">OPG073</name>
    <name type="ordered locus">VACWR067</name>
    <name type="ORF">E11L</name>
</gene>
<dbReference type="EMBL" id="M36339">
    <property type="protein sequence ID" value="AAB59831.1"/>
    <property type="molecule type" value="Genomic_DNA"/>
</dbReference>
<dbReference type="EMBL" id="AY243312">
    <property type="protein sequence ID" value="AAO89346.1"/>
    <property type="molecule type" value="Genomic_DNA"/>
</dbReference>
<dbReference type="RefSeq" id="YP_232949.1">
    <property type="nucleotide sequence ID" value="NC_006998.1"/>
</dbReference>
<dbReference type="PDB" id="8C8H">
    <property type="method" value="EM"/>
    <property type="resolution" value="3.84 A"/>
    <property type="chains" value="Q/R=1-129"/>
</dbReference>
<dbReference type="PDBsum" id="8C8H"/>
<dbReference type="EMDB" id="EMD-16476"/>
<dbReference type="SMR" id="P68448"/>
<dbReference type="DNASU" id="3707600"/>
<dbReference type="GeneID" id="3707600"/>
<dbReference type="KEGG" id="vg:3707600"/>
<dbReference type="Proteomes" id="UP000000344">
    <property type="component" value="Genome"/>
</dbReference>
<dbReference type="GO" id="GO:0044423">
    <property type="term" value="C:virion component"/>
    <property type="evidence" value="ECO:0007669"/>
    <property type="project" value="UniProtKB-KW"/>
</dbReference>
<dbReference type="InterPro" id="IPR009201">
    <property type="entry name" value="Virion_core"/>
</dbReference>
<dbReference type="Pfam" id="PF06138">
    <property type="entry name" value="Chordopox_E11"/>
    <property type="match status" value="1"/>
</dbReference>
<dbReference type="PIRSF" id="PIRSF015797">
    <property type="entry name" value="Virion_core"/>
    <property type="match status" value="1"/>
</dbReference>
<reference key="1">
    <citation type="journal article" date="1990" name="Mol. Cell. Biol.">
        <title>Identification of rpo30, a vaccinia virus RNA polymerase gene with structural similarity to a eucaryotic transcription elongation factor.</title>
        <authorList>
            <person name="Ahn B.-Y."/>
            <person name="Gershon P.D."/>
            <person name="Jones E.V."/>
            <person name="Moss B."/>
        </authorList>
    </citation>
    <scope>NUCLEOTIDE SEQUENCE [GENOMIC DNA]</scope>
</reference>
<reference key="2">
    <citation type="submission" date="2003-02" db="EMBL/GenBank/DDBJ databases">
        <title>Sequencing of the coding region of Vaccinia-WR to an average 9-fold redundancy and an error rate of 0.16/10kb.</title>
        <authorList>
            <person name="Esposito J.J."/>
            <person name="Frace A.M."/>
            <person name="Sammons S.A."/>
            <person name="Olsen-Rasmussen M."/>
            <person name="Osborne J."/>
            <person name="Wohlhueter R."/>
        </authorList>
    </citation>
    <scope>NUCLEOTIDE SEQUENCE [LARGE SCALE GENOMIC DNA]</scope>
</reference>
<reference key="3">
    <citation type="journal article" date="1996" name="Virology">
        <title>A temperature-sensitive mutation of the vaccinia virus E11 gene encoding a 15-kDa virion component.</title>
        <authorList>
            <person name="Wang S.P."/>
            <person name="Shuman S."/>
        </authorList>
    </citation>
    <scope>IDENTIFICATION</scope>
    <scope>INDUCTION</scope>
    <scope>SUBCELLULAR LOCATION</scope>
    <source>
        <strain>Mutant ts49</strain>
    </source>
</reference>
<reference key="4">
    <citation type="journal article" date="2015" name="J. Virol.">
        <title>Deciphering poxvirus gene expression by RNA sequencing and ribosome profiling.</title>
        <authorList>
            <person name="Yang Z."/>
            <person name="Cao S."/>
            <person name="Martens C.A."/>
            <person name="Porcella S.F."/>
            <person name="Xie Z."/>
            <person name="Ma M."/>
            <person name="Shen B."/>
            <person name="Moss B."/>
        </authorList>
    </citation>
    <scope>INDUCTION</scope>
</reference>
<protein>
    <recommendedName>
        <fullName>Core protein OPG073</fullName>
    </recommendedName>
    <alternativeName>
        <fullName>Core protein E11</fullName>
    </alternativeName>
</protein>
<feature type="chain" id="PRO_0000099469" description="Core protein OPG073">
    <location>
        <begin position="1"/>
        <end position="129"/>
    </location>
</feature>
<feature type="sequence variant" description="In strain: Mutant ts49.">
    <original>G</original>
    <variation>R</variation>
    <location>
        <position position="66"/>
    </location>
</feature>